<name>AKCL2_MACFA</name>
<proteinExistence type="evidence at transcript level"/>
<feature type="chain" id="PRO_0000287881" description="1,5-anhydro-D-fructose reductase">
    <location>
        <begin position="1"/>
        <end position="320"/>
    </location>
</feature>
<feature type="active site" description="Proton donor" evidence="1">
    <location>
        <position position="40"/>
    </location>
</feature>
<feature type="binding site" evidence="1">
    <location>
        <position position="102"/>
    </location>
    <ligand>
        <name>substrate</name>
    </ligand>
</feature>
<feature type="binding site" evidence="1">
    <location>
        <position position="194"/>
    </location>
    <ligand>
        <name>NADP(+)</name>
        <dbReference type="ChEBI" id="CHEBI:58349"/>
    </ligand>
</feature>
<feature type="binding site" evidence="1">
    <location>
        <begin position="265"/>
        <end position="277"/>
    </location>
    <ligand>
        <name>NADP(+)</name>
        <dbReference type="ChEBI" id="CHEBI:58349"/>
    </ligand>
</feature>
<feature type="site" description="Lowers pKa of active site Tyr" evidence="2">
    <location>
        <position position="69"/>
    </location>
</feature>
<organism>
    <name type="scientific">Macaca fascicularis</name>
    <name type="common">Crab-eating macaque</name>
    <name type="synonym">Cynomolgus monkey</name>
    <dbReference type="NCBI Taxonomy" id="9541"/>
    <lineage>
        <taxon>Eukaryota</taxon>
        <taxon>Metazoa</taxon>
        <taxon>Chordata</taxon>
        <taxon>Craniata</taxon>
        <taxon>Vertebrata</taxon>
        <taxon>Euteleostomi</taxon>
        <taxon>Mammalia</taxon>
        <taxon>Eutheria</taxon>
        <taxon>Euarchontoglires</taxon>
        <taxon>Primates</taxon>
        <taxon>Haplorrhini</taxon>
        <taxon>Catarrhini</taxon>
        <taxon>Cercopithecidae</taxon>
        <taxon>Cercopithecinae</taxon>
        <taxon>Macaca</taxon>
    </lineage>
</organism>
<keyword id="KW-0963">Cytoplasm</keyword>
<keyword id="KW-0521">NADP</keyword>
<keyword id="KW-0560">Oxidoreductase</keyword>
<keyword id="KW-1185">Reference proteome</keyword>
<comment type="function">
    <text evidence="4">Catalyzes the NADPH-dependent reduction of 1,5-anhydro-D-fructose (AF) to 1,5-anhydro-D-glucitol.</text>
</comment>
<comment type="catalytic activity">
    <reaction evidence="4">
        <text>1,5-anhydro-D-glucitol + NADP(+) = 1,5-anhydro-D-fructose + NADPH + H(+)</text>
        <dbReference type="Rhea" id="RHEA:20665"/>
        <dbReference type="ChEBI" id="CHEBI:15378"/>
        <dbReference type="ChEBI" id="CHEBI:16070"/>
        <dbReference type="ChEBI" id="CHEBI:16715"/>
        <dbReference type="ChEBI" id="CHEBI:57783"/>
        <dbReference type="ChEBI" id="CHEBI:58349"/>
        <dbReference type="EC" id="1.1.1.263"/>
    </reaction>
</comment>
<comment type="activity regulation">
    <text evidence="3">Inhibited by p-chloromercuribenzoic acid and alkyliodines.</text>
</comment>
<comment type="subunit">
    <text evidence="3">Monomer.</text>
</comment>
<comment type="subcellular location">
    <subcellularLocation>
        <location evidence="5">Cytoplasm</location>
    </subcellularLocation>
</comment>
<comment type="similarity">
    <text evidence="5">Belongs to the aldo/keto reductase family.</text>
</comment>
<evidence type="ECO:0000250" key="1">
    <source>
        <dbReference type="UniProtKB" id="O60218"/>
    </source>
</evidence>
<evidence type="ECO:0000250" key="2">
    <source>
        <dbReference type="UniProtKB" id="P14550"/>
    </source>
</evidence>
<evidence type="ECO:0000250" key="3">
    <source>
        <dbReference type="UniProtKB" id="P82125"/>
    </source>
</evidence>
<evidence type="ECO:0000250" key="4">
    <source>
        <dbReference type="UniProtKB" id="Q9DCT1"/>
    </source>
</evidence>
<evidence type="ECO:0000305" key="5"/>
<sequence>MGDIPAVGLSCWKASPGKVTEAVKVAIDAGYRHFNCAYFYHNEKEVGAGIRYKIKEGAVRREDLFIASKLWCTCHKKSLVKTACRRSLKALKLNYLDLYLIHWPMGFKPPHPEWIMSCSELSFCLSHPGVHDLPLDESDMVIPGDTDFLDTWEAMEDLVITGLVKNIGVSNFNHEQLERLLNKPGLRFKPVTNQIECHPYLTQKNLISFCQSRGVSVTAYRPLGGSCEGVDLIDDPVIQRIAKEHSKSPAQILIRFQTQRNVIVIPGSITPSHIKENIQVFDFELTQHDMDNILSLDRNLRLATFPITKNHKDYPFHIEY</sequence>
<reference key="1">
    <citation type="submission" date="2005-06" db="EMBL/GenBank/DDBJ databases">
        <title>DNA sequences of macaque genes expressed in brain or testis and its evolutionary implications.</title>
        <authorList>
            <consortium name="International consortium for macaque cDNA sequencing and analysis"/>
        </authorList>
    </citation>
    <scope>NUCLEOTIDE SEQUENCE [LARGE SCALE MRNA]</scope>
    <source>
        <tissue>Testis</tissue>
    </source>
</reference>
<gene>
    <name type="primary">AKR1E2</name>
    <name type="synonym">AKR1CL2</name>
    <name type="ORF">QtsA-13895</name>
</gene>
<protein>
    <recommendedName>
        <fullName>1,5-anhydro-D-fructose reductase</fullName>
        <shortName>AF reductase</shortName>
        <ecNumber evidence="4">1.1.1.263</ecNumber>
    </recommendedName>
    <alternativeName>
        <fullName>Aldo-keto reductase family 1 member C-like protein 2</fullName>
    </alternativeName>
    <alternativeName>
        <fullName>Aldo-keto reductase family 1 member E2</fullName>
    </alternativeName>
</protein>
<dbReference type="EC" id="1.1.1.263" evidence="4"/>
<dbReference type="EMBL" id="AB168659">
    <property type="protein sequence ID" value="BAE00770.1"/>
    <property type="molecule type" value="mRNA"/>
</dbReference>
<dbReference type="RefSeq" id="NP_001270572.1">
    <property type="nucleotide sequence ID" value="NM_001283643.1"/>
</dbReference>
<dbReference type="SMR" id="Q4R802"/>
<dbReference type="STRING" id="9541.ENSMFAP00000018390"/>
<dbReference type="eggNOG" id="KOG1577">
    <property type="taxonomic scope" value="Eukaryota"/>
</dbReference>
<dbReference type="Proteomes" id="UP000233100">
    <property type="component" value="Unplaced"/>
</dbReference>
<dbReference type="GO" id="GO:0005737">
    <property type="term" value="C:cytoplasm"/>
    <property type="evidence" value="ECO:0007669"/>
    <property type="project" value="UniProtKB-SubCell"/>
</dbReference>
<dbReference type="GO" id="GO:0050571">
    <property type="term" value="F:1,5-anhydro-D-fructose reductase activity"/>
    <property type="evidence" value="ECO:0007669"/>
    <property type="project" value="UniProtKB-EC"/>
</dbReference>
<dbReference type="CDD" id="cd19110">
    <property type="entry name" value="AKR_AKR1E1-2"/>
    <property type="match status" value="1"/>
</dbReference>
<dbReference type="FunFam" id="3.20.20.100:FF:000030">
    <property type="entry name" value="Aldo-keto reductase family 1 member E2"/>
    <property type="match status" value="1"/>
</dbReference>
<dbReference type="Gene3D" id="3.20.20.100">
    <property type="entry name" value="NADP-dependent oxidoreductase domain"/>
    <property type="match status" value="1"/>
</dbReference>
<dbReference type="InterPro" id="IPR020471">
    <property type="entry name" value="AKR"/>
</dbReference>
<dbReference type="InterPro" id="IPR044484">
    <property type="entry name" value="AKR1E2"/>
</dbReference>
<dbReference type="InterPro" id="IPR018170">
    <property type="entry name" value="Aldo/ket_reductase_CS"/>
</dbReference>
<dbReference type="InterPro" id="IPR023210">
    <property type="entry name" value="NADP_OxRdtase_dom"/>
</dbReference>
<dbReference type="InterPro" id="IPR036812">
    <property type="entry name" value="NADP_OxRdtase_dom_sf"/>
</dbReference>
<dbReference type="PANTHER" id="PTHR11732">
    <property type="entry name" value="ALDO/KETO REDUCTASE"/>
    <property type="match status" value="1"/>
</dbReference>
<dbReference type="Pfam" id="PF00248">
    <property type="entry name" value="Aldo_ket_red"/>
    <property type="match status" value="1"/>
</dbReference>
<dbReference type="PIRSF" id="PIRSF000097">
    <property type="entry name" value="AKR"/>
    <property type="match status" value="1"/>
</dbReference>
<dbReference type="PRINTS" id="PR00069">
    <property type="entry name" value="ALDKETRDTASE"/>
</dbReference>
<dbReference type="SUPFAM" id="SSF51430">
    <property type="entry name" value="NAD(P)-linked oxidoreductase"/>
    <property type="match status" value="1"/>
</dbReference>
<dbReference type="PROSITE" id="PS00062">
    <property type="entry name" value="ALDOKETO_REDUCTASE_2"/>
    <property type="match status" value="1"/>
</dbReference>
<accession>Q4R802</accession>